<gene>
    <name evidence="1" type="primary">mraZ</name>
    <name type="ordered locus">SSON_0089</name>
</gene>
<dbReference type="EMBL" id="CP000038">
    <property type="protein sequence ID" value="AAZ86884.1"/>
    <property type="molecule type" value="Genomic_DNA"/>
</dbReference>
<dbReference type="RefSeq" id="WP_005139306.1">
    <property type="nucleotide sequence ID" value="NC_007384.1"/>
</dbReference>
<dbReference type="SMR" id="Q3Z5S8"/>
<dbReference type="GeneID" id="93777353"/>
<dbReference type="KEGG" id="ssn:SSON_0089"/>
<dbReference type="HOGENOM" id="CLU_107907_2_0_6"/>
<dbReference type="Proteomes" id="UP000002529">
    <property type="component" value="Chromosome"/>
</dbReference>
<dbReference type="GO" id="GO:0005737">
    <property type="term" value="C:cytoplasm"/>
    <property type="evidence" value="ECO:0007669"/>
    <property type="project" value="UniProtKB-UniRule"/>
</dbReference>
<dbReference type="GO" id="GO:0009295">
    <property type="term" value="C:nucleoid"/>
    <property type="evidence" value="ECO:0007669"/>
    <property type="project" value="UniProtKB-SubCell"/>
</dbReference>
<dbReference type="GO" id="GO:0003700">
    <property type="term" value="F:DNA-binding transcription factor activity"/>
    <property type="evidence" value="ECO:0007669"/>
    <property type="project" value="UniProtKB-UniRule"/>
</dbReference>
<dbReference type="GO" id="GO:0000976">
    <property type="term" value="F:transcription cis-regulatory region binding"/>
    <property type="evidence" value="ECO:0007669"/>
    <property type="project" value="TreeGrafter"/>
</dbReference>
<dbReference type="GO" id="GO:2000143">
    <property type="term" value="P:negative regulation of DNA-templated transcription initiation"/>
    <property type="evidence" value="ECO:0007669"/>
    <property type="project" value="TreeGrafter"/>
</dbReference>
<dbReference type="CDD" id="cd16321">
    <property type="entry name" value="MraZ_C"/>
    <property type="match status" value="1"/>
</dbReference>
<dbReference type="CDD" id="cd16320">
    <property type="entry name" value="MraZ_N"/>
    <property type="match status" value="1"/>
</dbReference>
<dbReference type="FunFam" id="3.40.1550.20:FF:000001">
    <property type="entry name" value="Transcriptional regulator MraZ"/>
    <property type="match status" value="1"/>
</dbReference>
<dbReference type="Gene3D" id="3.40.1550.20">
    <property type="entry name" value="Transcriptional regulator MraZ domain"/>
    <property type="match status" value="1"/>
</dbReference>
<dbReference type="HAMAP" id="MF_01008">
    <property type="entry name" value="MraZ"/>
    <property type="match status" value="1"/>
</dbReference>
<dbReference type="InterPro" id="IPR003444">
    <property type="entry name" value="MraZ"/>
</dbReference>
<dbReference type="InterPro" id="IPR035644">
    <property type="entry name" value="MraZ_C"/>
</dbReference>
<dbReference type="InterPro" id="IPR020603">
    <property type="entry name" value="MraZ_dom"/>
</dbReference>
<dbReference type="InterPro" id="IPR035642">
    <property type="entry name" value="MraZ_N"/>
</dbReference>
<dbReference type="InterPro" id="IPR038619">
    <property type="entry name" value="MraZ_sf"/>
</dbReference>
<dbReference type="InterPro" id="IPR007159">
    <property type="entry name" value="SpoVT-AbrB_dom"/>
</dbReference>
<dbReference type="InterPro" id="IPR037914">
    <property type="entry name" value="SpoVT-AbrB_sf"/>
</dbReference>
<dbReference type="NCBIfam" id="TIGR00242">
    <property type="entry name" value="division/cell wall cluster transcriptional repressor MraZ"/>
    <property type="match status" value="1"/>
</dbReference>
<dbReference type="PANTHER" id="PTHR34701">
    <property type="entry name" value="TRANSCRIPTIONAL REGULATOR MRAZ"/>
    <property type="match status" value="1"/>
</dbReference>
<dbReference type="PANTHER" id="PTHR34701:SF1">
    <property type="entry name" value="TRANSCRIPTIONAL REGULATOR MRAZ"/>
    <property type="match status" value="1"/>
</dbReference>
<dbReference type="Pfam" id="PF02381">
    <property type="entry name" value="MraZ"/>
    <property type="match status" value="2"/>
</dbReference>
<dbReference type="SUPFAM" id="SSF89447">
    <property type="entry name" value="AbrB/MazE/MraZ-like"/>
    <property type="match status" value="1"/>
</dbReference>
<dbReference type="PROSITE" id="PS51740">
    <property type="entry name" value="SPOVT_ABRB"/>
    <property type="match status" value="2"/>
</dbReference>
<sequence>MFRGATLVNLDSKGRLSVPTRYREQLLENAVGQMVCTIDIHHPCLLLYPLPEWEIIEQKLSRLSSMNPVERRVQRLLLGHASECQMDGAGRLLIAPVLRQHAGLTKEVMLVGQFNKFELWDETTWHQQVKEDIDAEQLATGDLSERLQDLSL</sequence>
<keyword id="KW-0963">Cytoplasm</keyword>
<keyword id="KW-0238">DNA-binding</keyword>
<keyword id="KW-1185">Reference proteome</keyword>
<keyword id="KW-0677">Repeat</keyword>
<keyword id="KW-0678">Repressor</keyword>
<keyword id="KW-0804">Transcription</keyword>
<keyword id="KW-0805">Transcription regulation</keyword>
<protein>
    <recommendedName>
        <fullName>Transcriptional regulator MraZ</fullName>
    </recommendedName>
</protein>
<organism>
    <name type="scientific">Shigella sonnei (strain Ss046)</name>
    <dbReference type="NCBI Taxonomy" id="300269"/>
    <lineage>
        <taxon>Bacteria</taxon>
        <taxon>Pseudomonadati</taxon>
        <taxon>Pseudomonadota</taxon>
        <taxon>Gammaproteobacteria</taxon>
        <taxon>Enterobacterales</taxon>
        <taxon>Enterobacteriaceae</taxon>
        <taxon>Shigella</taxon>
    </lineage>
</organism>
<name>MRAZ_SHISS</name>
<reference key="1">
    <citation type="journal article" date="2005" name="Nucleic Acids Res.">
        <title>Genome dynamics and diversity of Shigella species, the etiologic agents of bacillary dysentery.</title>
        <authorList>
            <person name="Yang F."/>
            <person name="Yang J."/>
            <person name="Zhang X."/>
            <person name="Chen L."/>
            <person name="Jiang Y."/>
            <person name="Yan Y."/>
            <person name="Tang X."/>
            <person name="Wang J."/>
            <person name="Xiong Z."/>
            <person name="Dong J."/>
            <person name="Xue Y."/>
            <person name="Zhu Y."/>
            <person name="Xu X."/>
            <person name="Sun L."/>
            <person name="Chen S."/>
            <person name="Nie H."/>
            <person name="Peng J."/>
            <person name="Xu J."/>
            <person name="Wang Y."/>
            <person name="Yuan Z."/>
            <person name="Wen Y."/>
            <person name="Yao Z."/>
            <person name="Shen Y."/>
            <person name="Qiang B."/>
            <person name="Hou Y."/>
            <person name="Yu J."/>
            <person name="Jin Q."/>
        </authorList>
    </citation>
    <scope>NUCLEOTIDE SEQUENCE [LARGE SCALE GENOMIC DNA]</scope>
    <source>
        <strain>Ss046</strain>
    </source>
</reference>
<comment type="function">
    <text evidence="1">Negatively regulates its own expression and that of the subsequent genes in the proximal part of the division and cell wall (dcw) gene cluster. Acts by binding directly to DNA. May also regulate the expression of genes outside the dcw cluster.</text>
</comment>
<comment type="subunit">
    <text evidence="1">Forms oligomers.</text>
</comment>
<comment type="subcellular location">
    <subcellularLocation>
        <location evidence="1">Cytoplasm</location>
        <location evidence="1">Nucleoid</location>
    </subcellularLocation>
</comment>
<comment type="similarity">
    <text evidence="1">Belongs to the MraZ family.</text>
</comment>
<evidence type="ECO:0000255" key="1">
    <source>
        <dbReference type="HAMAP-Rule" id="MF_01008"/>
    </source>
</evidence>
<evidence type="ECO:0000255" key="2">
    <source>
        <dbReference type="PROSITE-ProRule" id="PRU01076"/>
    </source>
</evidence>
<accession>Q3Z5S8</accession>
<proteinExistence type="inferred from homology"/>
<feature type="chain" id="PRO_0000230110" description="Transcriptional regulator MraZ">
    <location>
        <begin position="1"/>
        <end position="152"/>
    </location>
</feature>
<feature type="domain" description="SpoVT-AbrB 1" evidence="2">
    <location>
        <begin position="5"/>
        <end position="52"/>
    </location>
</feature>
<feature type="domain" description="SpoVT-AbrB 2" evidence="2">
    <location>
        <begin position="81"/>
        <end position="124"/>
    </location>
</feature>